<name>GRSB_BREBE</name>
<accession>P0C064</accession>
<accession>P14688</accession>
<accession>Q44928</accession>
<organism>
    <name type="scientific">Brevibacillus brevis</name>
    <name type="common">Bacillus brevis</name>
    <dbReference type="NCBI Taxonomy" id="1393"/>
    <lineage>
        <taxon>Bacteria</taxon>
        <taxon>Bacillati</taxon>
        <taxon>Bacillota</taxon>
        <taxon>Bacilli</taxon>
        <taxon>Bacillales</taxon>
        <taxon>Paenibacillaceae</taxon>
        <taxon>Brevibacillus</taxon>
    </lineage>
</organism>
<reference key="1">
    <citation type="journal article" date="1994" name="J. Biochem.">
        <title>Entire nucleotide sequence for Bacillus brevis Nagano grs2 gene encoding gramicidin S synthetase 2; a multifunctional peptide synthetas.</title>
        <authorList>
            <person name="Saito F."/>
            <person name="Hori K."/>
            <person name="Kanda M."/>
            <person name="Kurotsu T."/>
            <person name="Saito Y."/>
        </authorList>
    </citation>
    <scope>NUCLEOTIDE SEQUENCE [GENOMIC DNA]</scope>
    <source>
        <strain>Nagano</strain>
    </source>
</reference>
<reference key="2">
    <citation type="journal article" date="1991" name="J. Biochem.">
        <title>The nucleotide sequence for a proline-activating domain of gramicidin S synthetase 2 gene from Bacillus brevis.</title>
        <authorList>
            <person name="Hori K."/>
            <person name="Yamamoto Y."/>
            <person name="Tokita K."/>
            <person name="Saito F."/>
            <person name="Kurotsu T."/>
            <person name="Kanda M."/>
            <person name="Okamura K."/>
            <person name="Furuyama J."/>
            <person name="Saito Y."/>
        </authorList>
    </citation>
    <scope>NUCLEOTIDE SEQUENCE [GENOMIC DNA] OF 1-949</scope>
    <source>
        <strain>Nagano</strain>
    </source>
</reference>
<reference key="3">
    <citation type="journal article" date="1991" name="J. Biochem.">
        <title>Characterization and location of the L-proline activating fragment from the multifunctional gramicidin S synthetase 2.</title>
        <authorList>
            <person name="Kurotsu T."/>
            <person name="Hori K."/>
            <person name="Kanda M."/>
            <person name="Saito Y."/>
        </authorList>
    </citation>
    <scope>PROTEIN SEQUENCE OF 2-16</scope>
    <scope>CHARACTERIZATION</scope>
    <source>
        <strain>Nagano</strain>
    </source>
</reference>
<proteinExistence type="evidence at protein level"/>
<feature type="initiator methionine" description="Removed" evidence="3">
    <location>
        <position position="1"/>
    </location>
</feature>
<feature type="chain" id="PRO_0000193088" description="Gramicidin S synthase 2">
    <location>
        <begin position="2"/>
        <end position="4450"/>
    </location>
</feature>
<feature type="domain" description="Carrier 1" evidence="2">
    <location>
        <begin position="971"/>
        <end position="1046"/>
    </location>
</feature>
<feature type="domain" description="Carrier 2" evidence="2">
    <location>
        <begin position="2006"/>
        <end position="2081"/>
    </location>
</feature>
<feature type="domain" description="Carrier 3" evidence="2">
    <location>
        <begin position="3051"/>
        <end position="3126"/>
    </location>
</feature>
<feature type="domain" description="Carrier 4" evidence="2">
    <location>
        <begin position="4089"/>
        <end position="4164"/>
    </location>
</feature>
<feature type="region of interest" description="Domain 1 (proline-activating)" evidence="1">
    <location>
        <begin position="467"/>
        <end position="1044"/>
    </location>
</feature>
<feature type="region of interest" description="Domain 2 (valine-activating)" evidence="1">
    <location>
        <begin position="1521"/>
        <end position="2080"/>
    </location>
</feature>
<feature type="region of interest" description="Domain 3 (ornithine-activating)" evidence="1">
    <location>
        <begin position="2538"/>
        <end position="3134"/>
    </location>
</feature>
<feature type="region of interest" description="Domain 4 (leucine-activating)" evidence="1">
    <location>
        <begin position="3590"/>
        <end position="4172"/>
    </location>
</feature>
<feature type="modified residue" description="O-(pantetheine 4'-phosphoryl)serine" evidence="2">
    <location>
        <position position="1006"/>
    </location>
</feature>
<feature type="modified residue" description="O-(pantetheine 4'-phosphoryl)serine" evidence="2">
    <location>
        <position position="2041"/>
    </location>
</feature>
<feature type="modified residue" description="O-(pantetheine 4'-phosphoryl)serine" evidence="2">
    <location>
        <position position="3086"/>
    </location>
</feature>
<feature type="modified residue" description="O-(pantetheine 4'-phosphoryl)serine" evidence="2">
    <location>
        <position position="4124"/>
    </location>
</feature>
<evidence type="ECO:0000250" key="1"/>
<evidence type="ECO:0000255" key="2">
    <source>
        <dbReference type="PROSITE-ProRule" id="PRU00258"/>
    </source>
</evidence>
<evidence type="ECO:0000269" key="3">
    <source>
    </source>
</evidence>
<evidence type="ECO:0000305" key="4"/>
<protein>
    <recommendedName>
        <fullName>Gramicidin S synthase 2</fullName>
    </recommendedName>
    <alternativeName>
        <fullName>Gramicidin S synthase II</fullName>
    </alternativeName>
    <domain>
        <recommendedName>
            <fullName>ATP-dependent proline adenylase</fullName>
            <shortName>ProA</shortName>
        </recommendedName>
        <alternativeName>
            <fullName>Proline activase</fullName>
        </alternativeName>
    </domain>
    <domain>
        <recommendedName>
            <fullName>ATP-dependent valine adenylase</fullName>
            <shortName>ValA</shortName>
        </recommendedName>
        <alternativeName>
            <fullName>Valine activase</fullName>
        </alternativeName>
    </domain>
    <domain>
        <recommendedName>
            <fullName>ATP-dependent ornithine adenylase</fullName>
            <shortName>OrnA</shortName>
        </recommendedName>
        <alternativeName>
            <fullName>Ornithine activase</fullName>
        </alternativeName>
    </domain>
    <domain>
        <recommendedName>
            <fullName>ATP-dependent leucine adenylase</fullName>
            <shortName>LeuA</shortName>
        </recommendedName>
        <alternativeName>
            <fullName>Leucine activase</fullName>
        </alternativeName>
    </domain>
</protein>
<sequence length="4450" mass="508684">MSTFKKEHVQDMYRLSPMQEGMLFHALLDKDKNAHLVQMSIAIEGIVDVELLSESLNILIDRYDVFRTTFLHEKIKQPLQVVLKERPVQLQFKDISSLDEEKREQAIEQYKYQDGETVFDLTRDPLMRVAIFQTGKVNYQMIWSFHHILMDGWCFNIIFNDLFNIYLSLKEKKPLQLEAVQPYKQFIKWLEKQDKQEALRYWKEHLMNYDQSVTLPKKKAAINNTTYEPAQFRFAFDKVLTQQLLRIANQSQVTLNIVFQTIWGIVLQKYNSTNDVVYGSVVSGRPSEISGIEKMVGLFINTLPLRIQTQKDQSFIELVKTVHQNVLFSQQHEYFPLYEIQNHTELKQNLIDHIMVIENYPLVEELQKNSIMQKVGFTVRDVKMFEPTNYDMTVMVLPRDEISVRLDYNAAVYDIDFIRKIEGHMKEVALCVANNPHVLVQDVPLLTKQEKQHLLVELHDSITEYPDKTIHQLFTEQVEKTPEHVAVVFEDEKVTYRELHERSNQLARFLREKGVKKESIIGIMMERSVEMIVGILGILKAGGAFVPIDPEYPKERIGYMLDSVRLVLTQRHLKDKFAFTKETIVIEDPSISHELTEEIDYINESEDLFYIIYTSGTTGKPKGVMLEHKNIVNLLHFTFEKTNINFSDKVLQYTTCSFDVCYQEIFSTLLSGGQLYLIRKETQRDVEQLFDLVKRENIEVLSFPVAFLKFIFNEREFINRFPTCVKHIITAGEQLVVNNEFKRYLHEHNVHLHNHYGPSETHVVTTYTINPEAEIPELPPIGKPISNTWIYILDQEQQLQPQGIVGELYISGANVGRGYLNNQELTAEKFFADPFRPNERMYRTGDLARWLPDGNIEFLGRADHQVKIRGHRIELGEIEAQLLNCKGVKEAVVIDKADDKGGKYLCAYVVMEVEVNDSELREYLGKALPDYMIPSFFVPLDQLPLTPNGKIDRKSLPNLEGIVNTNAKYVVPTNELEEKLAKIWEEVLGISQIGIQDNFFSLGGHSLKAITLISRMNKECNVDIPLRLLFEAPTIQEISNYINGAKKESYVAIQPVPEQEYYPVSSVQKRMFILNEFDRSGTAYNLPGVMFLDGKLNYRQLEAAVKKLVERHEALRTSFHSINGEPVQRVHQNVELQIAYSESTEDQVERIIAEFMQPFALEVAPLLRVGLVKLEAERHLFIMDMHHIISDGVSMQIMIQEIADLYKEKELPTLGIQYKDFTVWHNRLLQSDVIEKQEAYWLNVFTEEIPVLNLPTDYPRPTIQSFDGKRFTFSTGKQLMDDLYKVATETGTTLYMVLLAAYNVFLSKYSGQDDIVVGTPIAGRSHADVENMLGMFVNTLAIRSRLNNEDTFKDFLANVKQTALHAYENPDYPFDTLVEKLGIQRDLSRNPLFDTMFVLQNTDRKSFEVEQITITPYVPNSRHSKFDLTLEVSEEQNEILLCLEYCTKLFTDKTVERMAGHFLQILHAIVGNPTIIISEIEILSEEEKQHILFEFNDTKTTYPHMQTIQGLFEEQVEKTPDHVAVGWKDQALTYRELNERANQVARVLRQKGVQPDNIVGLLVERSPEMLVGIMGILKAGGAYLPLDPEYPADRISYMIQDCGVRIMLTQQHLLSLVHDEFDCVILDEDSLYKGDSSNLAPVNQAGDLAYIMYTSGSTGKPKGVMVEHRNVIRLVKNTNYVQVREDDRIIQTGAIGFDALTFEVFGSLLHGAELYPVTKDVLLDAEKLHKFLQANQITIMWLTSPLFNQLSQGTEEMFAGLRSLIVGGDALSPKHINNVKRKCPNLTMWNGYGPTENTTFSTCFLIDKEYDDNIPIGKAISNSTVYIMDRYGQLQPVGVPGELCVGGDGVARGYMNQPALTEEKFVPNPFAPGERMYRTGDLARWLPDGTIEYLGRIDQQVKIRGYRIEPGEIETLLVKHKKVKESVIMVVEDNNGQKALCAYYVPEEEVTVSELREYIAKELPVYMVPAYFVQIEQMPLTQNGKVNRSALPKPDGEFGTATEYVAPSSDIEMKLAEIWHNVLGVNKIGVLDNFFELGGHSLRAMTMISQVHKEFDVELPLKVLFETPTISALAQYIADGEKGMYLAIQPVTPQDYYPVSSAQKRMYILYEFEGAGITYNVPNVMFIEGKLDYQRFEYAIKSLINRHEALRTSFYSLNGEPVQRVHQNVELQIAYSEAKEDEIEQIVESFVQPFDLEIAPALRVGLVKLASDRHLFLMDMHHIISDGVSMQIITKEIADLYKGKELAELHIQYKDFAVWQNEWFQSAALEKQKTYWLNTFAEDIPVLNLSTDYPRPTIQSFEGDIVTFSAGKQLAEELKRLATETGTTLYMLLLAAYNVLLHKYSGQEEIVVGTPIAGRSHADVENIVGMFVNTLALKNTPIAVRTFHEFLLEVKQNALEAFENQDYPFENLIEKLQVRRDLSRNPLFDTMFSLSNIDEQVEIGIEGLSFSPYEMQYWIAKFDISFDILEKQDDIQFYFNYCTNLFKKETIERLATHFMHILQEIVINPEIKLCEINMLSEEEQQRVLYDFNGTDATYATNKIFHELFEEQVEKTPDHIAVIDEREKLSYQELNAKANQLARVLRQKGVQPNSMVGIMVDRSLDMIVGMLGVLKAGGAYVPIDIDYPQERISYMMEDSGAALLLTQQKLTQQIAFSGDILYLDQEEWLHEEASNLEPIARPQDIAYIIYTSGTTGKPKGVMIEHQSYVNVAMAWKDAYRLDTFPVRLLQMASFAFDVSAGDFARALLTGGQLIVCPNEVKMDPASLYAIIKKYDITIFEATPALVIPLMEYIYEQKLDISQLQILIVGSDSCSMEDFKTLVSRFGSTIRIVNSYGVTEACIDSSYYEQPLSSLHVTGTVPIGKPYANMKMYIMNQYLQIQPVGVIGELCIGGAGVARGYLNRPDLTAEKFVPNPFVPGEKLYRTGDLARWMPDGNVEFLGRNDHQVKIRGIRIELGEIEAQLRKHDSIKEATVIAREDHMKEKYLCAYMVTEGEVNVAELRAYLATDLPAAMIPSYFVSLEAMPLTANGKIDKRSLPEPDGSISIGTEYVAPRTMLEGKLEEIWKDVLGLQRVGIHDDFFTIGGHSLKAMAVISQVHKECQTEVPLRVLFETPTIQGLAKYIEETDTEQYMAIQPVSGQDYYPVSSAQKRMFIVNQFDGVGISYNMPSIMLIEGKLERTRLESAFKRLIERHESLRTSFEIINGKPVQKIHEEADFNMSYQVASNEQVEKMIDEFIQPFDLSVAPLLRVELLKLEEDRHVLIFDMHHIISDGISSNILMKELGELYQGNALPELRIQYKDFAVWQNEWFQSEAFKKQEEYWVNVFADERPILDIPTDYPRPMQQSFDGAQLTFGTGKQLMDGLYRVATETGTTLYMVLLAAYNVLLSKYSGQEDIIVGTPIVGRSHTDLENIVGMFVNTLAMRNKPEGEKTFKAFVSEIKQNALAAFENQDYPFEELIEKLEIQRDLSRNPLFDTLFSLQNIGEESFELAELTCKPFDLVSKLEHAKFDLSLVAVEKEEEIAFGLQYCTKLYKEKTVEQLAQHFIQIVKAIVENPDVKLSDIDMLSEEEKKQIMLEFNDTKIQYPQNQTIQELFEEQVKKTPEHIAIVWEGQALTYHELNIKANQLARVLREKGVTPNHPVAIMTERSLEMIVGIFSILKAGGAYVPIDPAYPQERIQYLLEDSGATLLLTQSHVLNKLPVDIEWLDLTDEQNYVEDGTNLPFMNQSTDLAYIIYTSGTTGKPKGVMIEHQSIINCLQWRKEEYEFGPGDTALQVFSFAFDGFVASLFAPILAGATSVLPKEEEAKDPVALKKLIASEEITHYYGVPSLFSAILDVSSSKDLQNLRCVTLGGEKLPAQIVKKIKEKNKEIEVNNEYGPTENSVVTTIMRDIQVEQEITIGCPLSNVDVYIVNCNHQLQPVGVVGELCIGGQGLARGYLNKPELTADKFVVNPFVPGERMYKTGDLAKWRSDGMIEYVGRVDEQVKVRGYRIELGEIESAILEYEKIKEAVVIVSEHTASEQMLCAYIVGEEDVLTLDLRSYLAKLLPSYMIPNYFIQLDSIPLTPNGKVDRKALPEPQTIGLMAREYVAPRNEIEAQLVLIWQEVLGIELIGITDNFFELGGHSLKATLLVAKIYEYMQIEMPLNVVFKHSTIMKIAEYITHQESENNVHQPILVNVEADREALSLNGEKQRKNIELPILLNEETDRNVFLFAPIGAQGVFYKKLAEQIPTASLYGFDFIEDDDRIQQYIESMIQTQSDGQYVLIGYSSGGNLAFEVAKEMERQGYSVSDLVLFDVYWKGKVFEQTKEEEEENIKIIMEELRENPGMFNMTREDFELYFANEFVKQSFTRKMRKYMSFYTQLVNYGEVEATIHLIQAEFEEEKIDENEKADEEEKTYLEEKWNEKAWNKAAKRFVKYNGYGAHSNMLGGDGLERNSSILKQILQGTFVVK</sequence>
<dbReference type="EMBL" id="D29676">
    <property type="protein sequence ID" value="BAA06146.1"/>
    <property type="molecule type" value="Genomic_DNA"/>
</dbReference>
<dbReference type="EMBL" id="D00938">
    <property type="protein sequence ID" value="BAA00778.1"/>
    <property type="molecule type" value="Genomic_DNA"/>
</dbReference>
<dbReference type="PIR" id="JX0340">
    <property type="entry name" value="JX0340"/>
</dbReference>
<dbReference type="PIR" id="S20542">
    <property type="entry name" value="YGBSG2"/>
</dbReference>
<dbReference type="SMR" id="P0C064"/>
<dbReference type="ESTHER" id="bacbr-grsb">
    <property type="family name" value="Thioesterase"/>
</dbReference>
<dbReference type="UniPathway" id="UPA00102"/>
<dbReference type="GO" id="GO:0005829">
    <property type="term" value="C:cytosol"/>
    <property type="evidence" value="ECO:0007669"/>
    <property type="project" value="TreeGrafter"/>
</dbReference>
<dbReference type="GO" id="GO:0016787">
    <property type="term" value="F:hydrolase activity"/>
    <property type="evidence" value="ECO:0007669"/>
    <property type="project" value="UniProtKB-KW"/>
</dbReference>
<dbReference type="GO" id="GO:0016874">
    <property type="term" value="F:ligase activity"/>
    <property type="evidence" value="ECO:0007669"/>
    <property type="project" value="UniProtKB-KW"/>
</dbReference>
<dbReference type="GO" id="GO:0031177">
    <property type="term" value="F:phosphopantetheine binding"/>
    <property type="evidence" value="ECO:0007669"/>
    <property type="project" value="InterPro"/>
</dbReference>
<dbReference type="GO" id="GO:0043041">
    <property type="term" value="P:amino acid activation for nonribosomal peptide biosynthetic process"/>
    <property type="evidence" value="ECO:0007669"/>
    <property type="project" value="TreeGrafter"/>
</dbReference>
<dbReference type="GO" id="GO:0017000">
    <property type="term" value="P:antibiotic biosynthetic process"/>
    <property type="evidence" value="ECO:0007669"/>
    <property type="project" value="UniProtKB-KW"/>
</dbReference>
<dbReference type="GO" id="GO:0008610">
    <property type="term" value="P:lipid biosynthetic process"/>
    <property type="evidence" value="ECO:0007669"/>
    <property type="project" value="UniProtKB-ARBA"/>
</dbReference>
<dbReference type="GO" id="GO:0044550">
    <property type="term" value="P:secondary metabolite biosynthetic process"/>
    <property type="evidence" value="ECO:0007669"/>
    <property type="project" value="TreeGrafter"/>
</dbReference>
<dbReference type="CDD" id="cd05930">
    <property type="entry name" value="A_NRPS"/>
    <property type="match status" value="1"/>
</dbReference>
<dbReference type="CDD" id="cd17650">
    <property type="entry name" value="A_NRPS_PpsD_like"/>
    <property type="match status" value="1"/>
</dbReference>
<dbReference type="CDD" id="cd17656">
    <property type="entry name" value="A_NRPS_ProA"/>
    <property type="match status" value="1"/>
</dbReference>
<dbReference type="CDD" id="cd12117">
    <property type="entry name" value="A_NRPS_Srf_like"/>
    <property type="match status" value="1"/>
</dbReference>
<dbReference type="CDD" id="cd19543">
    <property type="entry name" value="DCL_NRPS"/>
    <property type="match status" value="1"/>
</dbReference>
<dbReference type="CDD" id="cd19531">
    <property type="entry name" value="LCL_NRPS-like"/>
    <property type="match status" value="3"/>
</dbReference>
<dbReference type="FunFam" id="3.30.300.30:FF:000010">
    <property type="entry name" value="Enterobactin synthetase component F"/>
    <property type="match status" value="4"/>
</dbReference>
<dbReference type="FunFam" id="3.30.559.10:FF:000012">
    <property type="entry name" value="Non-ribosomal peptide synthetase"/>
    <property type="match status" value="1"/>
</dbReference>
<dbReference type="FunFam" id="3.40.50.12780:FF:000012">
    <property type="entry name" value="Non-ribosomal peptide synthetase"/>
    <property type="match status" value="4"/>
</dbReference>
<dbReference type="FunFam" id="3.40.50.980:FF:000001">
    <property type="entry name" value="Non-ribosomal peptide synthetase"/>
    <property type="match status" value="4"/>
</dbReference>
<dbReference type="FunFam" id="2.30.38.10:FF:000001">
    <property type="entry name" value="Non-ribosomal peptide synthetase PvdI"/>
    <property type="match status" value="4"/>
</dbReference>
<dbReference type="FunFam" id="1.10.1200.10:FF:000005">
    <property type="entry name" value="Nonribosomal peptide synthetase 1"/>
    <property type="match status" value="4"/>
</dbReference>
<dbReference type="Gene3D" id="3.30.300.30">
    <property type="match status" value="4"/>
</dbReference>
<dbReference type="Gene3D" id="3.40.50.980">
    <property type="match status" value="8"/>
</dbReference>
<dbReference type="Gene3D" id="1.10.1200.10">
    <property type="entry name" value="ACP-like"/>
    <property type="match status" value="4"/>
</dbReference>
<dbReference type="Gene3D" id="3.40.50.1820">
    <property type="entry name" value="alpha/beta hydrolase"/>
    <property type="match status" value="1"/>
</dbReference>
<dbReference type="Gene3D" id="3.30.559.10">
    <property type="entry name" value="Chloramphenicol acetyltransferase-like domain"/>
    <property type="match status" value="4"/>
</dbReference>
<dbReference type="Gene3D" id="1.10.287.490">
    <property type="entry name" value="Helix hairpin bin"/>
    <property type="match status" value="1"/>
</dbReference>
<dbReference type="Gene3D" id="2.30.38.10">
    <property type="entry name" value="Luciferase, Domain 3"/>
    <property type="match status" value="4"/>
</dbReference>
<dbReference type="Gene3D" id="3.30.559.30">
    <property type="entry name" value="Nonribosomal peptide synthetase, condensation domain"/>
    <property type="match status" value="4"/>
</dbReference>
<dbReference type="InterPro" id="IPR010071">
    <property type="entry name" value="AA_adenyl_dom"/>
</dbReference>
<dbReference type="InterPro" id="IPR029058">
    <property type="entry name" value="AB_hydrolase_fold"/>
</dbReference>
<dbReference type="InterPro" id="IPR036736">
    <property type="entry name" value="ACP-like_sf"/>
</dbReference>
<dbReference type="InterPro" id="IPR025110">
    <property type="entry name" value="AMP-bd_C"/>
</dbReference>
<dbReference type="InterPro" id="IPR045851">
    <property type="entry name" value="AMP-bd_C_sf"/>
</dbReference>
<dbReference type="InterPro" id="IPR020845">
    <property type="entry name" value="AMP-binding_CS"/>
</dbReference>
<dbReference type="InterPro" id="IPR000873">
    <property type="entry name" value="AMP-dep_synth/lig_dom"/>
</dbReference>
<dbReference type="InterPro" id="IPR023213">
    <property type="entry name" value="CAT-like_dom_sf"/>
</dbReference>
<dbReference type="InterPro" id="IPR001242">
    <property type="entry name" value="Condensatn"/>
</dbReference>
<dbReference type="InterPro" id="IPR020806">
    <property type="entry name" value="PKS_PP-bd"/>
</dbReference>
<dbReference type="InterPro" id="IPR009081">
    <property type="entry name" value="PP-bd_ACP"/>
</dbReference>
<dbReference type="InterPro" id="IPR006162">
    <property type="entry name" value="Ppantetheine_attach_site"/>
</dbReference>
<dbReference type="InterPro" id="IPR001031">
    <property type="entry name" value="Thioesterase"/>
</dbReference>
<dbReference type="NCBIfam" id="TIGR01733">
    <property type="entry name" value="AA-adenyl-dom"/>
    <property type="match status" value="4"/>
</dbReference>
<dbReference type="NCBIfam" id="NF003417">
    <property type="entry name" value="PRK04813.1"/>
    <property type="match status" value="4"/>
</dbReference>
<dbReference type="PANTHER" id="PTHR45527:SF1">
    <property type="entry name" value="FATTY ACID SYNTHASE"/>
    <property type="match status" value="1"/>
</dbReference>
<dbReference type="PANTHER" id="PTHR45527">
    <property type="entry name" value="NONRIBOSOMAL PEPTIDE SYNTHETASE"/>
    <property type="match status" value="1"/>
</dbReference>
<dbReference type="Pfam" id="PF00501">
    <property type="entry name" value="AMP-binding"/>
    <property type="match status" value="4"/>
</dbReference>
<dbReference type="Pfam" id="PF13193">
    <property type="entry name" value="AMP-binding_C"/>
    <property type="match status" value="4"/>
</dbReference>
<dbReference type="Pfam" id="PF00668">
    <property type="entry name" value="Condensation"/>
    <property type="match status" value="4"/>
</dbReference>
<dbReference type="Pfam" id="PF00550">
    <property type="entry name" value="PP-binding"/>
    <property type="match status" value="4"/>
</dbReference>
<dbReference type="Pfam" id="PF00975">
    <property type="entry name" value="Thioesterase"/>
    <property type="match status" value="1"/>
</dbReference>
<dbReference type="SMART" id="SM00823">
    <property type="entry name" value="PKS_PP"/>
    <property type="match status" value="4"/>
</dbReference>
<dbReference type="SUPFAM" id="SSF56801">
    <property type="entry name" value="Acetyl-CoA synthetase-like"/>
    <property type="match status" value="4"/>
</dbReference>
<dbReference type="SUPFAM" id="SSF47336">
    <property type="entry name" value="ACP-like"/>
    <property type="match status" value="4"/>
</dbReference>
<dbReference type="SUPFAM" id="SSF53474">
    <property type="entry name" value="alpha/beta-Hydrolases"/>
    <property type="match status" value="1"/>
</dbReference>
<dbReference type="SUPFAM" id="SSF52777">
    <property type="entry name" value="CoA-dependent acyltransferases"/>
    <property type="match status" value="8"/>
</dbReference>
<dbReference type="PROSITE" id="PS00455">
    <property type="entry name" value="AMP_BINDING"/>
    <property type="match status" value="4"/>
</dbReference>
<dbReference type="PROSITE" id="PS50075">
    <property type="entry name" value="CARRIER"/>
    <property type="match status" value="4"/>
</dbReference>
<dbReference type="PROSITE" id="PS00012">
    <property type="entry name" value="PHOSPHOPANTETHEINE"/>
    <property type="match status" value="4"/>
</dbReference>
<keyword id="KW-0045">Antibiotic biosynthesis</keyword>
<keyword id="KW-0903">Direct protein sequencing</keyword>
<keyword id="KW-0378">Hydrolase</keyword>
<keyword id="KW-0436">Ligase</keyword>
<keyword id="KW-0511">Multifunctional enzyme</keyword>
<keyword id="KW-0596">Phosphopantetheine</keyword>
<keyword id="KW-0597">Phosphoprotein</keyword>
<keyword id="KW-0677">Repeat</keyword>
<comment type="function">
    <text>This protein is a multifunctional enzyme, able to activate and polymerize the amino acids Pro, Val, Orn and Leu. Activation sites for these AA consist of individual domains.</text>
</comment>
<comment type="cofactor">
    <cofactor>
        <name>pantetheine 4'-phosphate</name>
        <dbReference type="ChEBI" id="CHEBI:47942"/>
    </cofactor>
    <text>Binds 4 phosphopantetheines covalently.</text>
</comment>
<comment type="pathway">
    <text>Antibiotic biosynthesis; gramicidin S biosynthesis.</text>
</comment>
<comment type="subunit">
    <text>Large multienzyme complex of GrsA and GrsB.</text>
</comment>
<comment type="domain">
    <text>Consists of four modules, and harbors a putative thioesterase domain at its C-terminal end. Each module incorporates one amino acid into the peptide product and can be further subdivided into domains responsible for substrate adenylation, thiolation, condensation (not for the initiation module), and epimerization (optional), and N methylation (optional).</text>
</comment>
<comment type="similarity">
    <text evidence="4">Belongs to the ATP-dependent AMP-binding enzyme family.</text>
</comment>
<gene>
    <name type="primary">grsB</name>
    <name type="synonym">grs2</name>
</gene>